<organism>
    <name type="scientific">Pasteurella multocida (strain Pm70)</name>
    <dbReference type="NCBI Taxonomy" id="272843"/>
    <lineage>
        <taxon>Bacteria</taxon>
        <taxon>Pseudomonadati</taxon>
        <taxon>Pseudomonadota</taxon>
        <taxon>Gammaproteobacteria</taxon>
        <taxon>Pasteurellales</taxon>
        <taxon>Pasteurellaceae</taxon>
        <taxon>Pasteurella</taxon>
    </lineage>
</organism>
<dbReference type="EMBL" id="AE004439">
    <property type="protein sequence ID" value="AAK02988.1"/>
    <property type="molecule type" value="Genomic_DNA"/>
</dbReference>
<dbReference type="RefSeq" id="WP_010906909.1">
    <property type="nucleotide sequence ID" value="NC_002663.1"/>
</dbReference>
<dbReference type="SMR" id="P57886"/>
<dbReference type="STRING" id="272843.PM0904"/>
<dbReference type="EnsemblBacteria" id="AAK02988">
    <property type="protein sequence ID" value="AAK02988"/>
    <property type="gene ID" value="PM0904"/>
</dbReference>
<dbReference type="KEGG" id="pmu:PM0904"/>
<dbReference type="PATRIC" id="fig|272843.6.peg.914"/>
<dbReference type="HOGENOM" id="CLU_004131_5_1_6"/>
<dbReference type="OrthoDB" id="9763467at2"/>
<dbReference type="Proteomes" id="UP000000809">
    <property type="component" value="Chromosome"/>
</dbReference>
<dbReference type="GO" id="GO:0032300">
    <property type="term" value="C:mismatch repair complex"/>
    <property type="evidence" value="ECO:0007669"/>
    <property type="project" value="InterPro"/>
</dbReference>
<dbReference type="GO" id="GO:0005524">
    <property type="term" value="F:ATP binding"/>
    <property type="evidence" value="ECO:0007669"/>
    <property type="project" value="InterPro"/>
</dbReference>
<dbReference type="GO" id="GO:0016887">
    <property type="term" value="F:ATP hydrolysis activity"/>
    <property type="evidence" value="ECO:0007669"/>
    <property type="project" value="InterPro"/>
</dbReference>
<dbReference type="GO" id="GO:0140664">
    <property type="term" value="F:ATP-dependent DNA damage sensor activity"/>
    <property type="evidence" value="ECO:0007669"/>
    <property type="project" value="InterPro"/>
</dbReference>
<dbReference type="GO" id="GO:0030983">
    <property type="term" value="F:mismatched DNA binding"/>
    <property type="evidence" value="ECO:0007669"/>
    <property type="project" value="InterPro"/>
</dbReference>
<dbReference type="GO" id="GO:0006298">
    <property type="term" value="P:mismatch repair"/>
    <property type="evidence" value="ECO:0007669"/>
    <property type="project" value="UniProtKB-UniRule"/>
</dbReference>
<dbReference type="CDD" id="cd16926">
    <property type="entry name" value="HATPase_MutL-MLH-PMS-like"/>
    <property type="match status" value="1"/>
</dbReference>
<dbReference type="CDD" id="cd03482">
    <property type="entry name" value="MutL_Trans_MutL"/>
    <property type="match status" value="1"/>
</dbReference>
<dbReference type="FunFam" id="3.30.230.10:FF:000013">
    <property type="entry name" value="DNA mismatch repair endonuclease MutL"/>
    <property type="match status" value="1"/>
</dbReference>
<dbReference type="FunFam" id="3.30.565.10:FF:000003">
    <property type="entry name" value="DNA mismatch repair endonuclease MutL"/>
    <property type="match status" value="1"/>
</dbReference>
<dbReference type="Gene3D" id="3.30.230.10">
    <property type="match status" value="1"/>
</dbReference>
<dbReference type="Gene3D" id="3.30.565.10">
    <property type="entry name" value="Histidine kinase-like ATPase, C-terminal domain"/>
    <property type="match status" value="1"/>
</dbReference>
<dbReference type="Gene3D" id="3.30.1540.20">
    <property type="entry name" value="MutL, C-terminal domain, dimerisation subdomain"/>
    <property type="match status" value="1"/>
</dbReference>
<dbReference type="Gene3D" id="3.30.1370.100">
    <property type="entry name" value="MutL, C-terminal domain, regulatory subdomain"/>
    <property type="match status" value="1"/>
</dbReference>
<dbReference type="HAMAP" id="MF_00149">
    <property type="entry name" value="DNA_mis_repair"/>
    <property type="match status" value="1"/>
</dbReference>
<dbReference type="InterPro" id="IPR014762">
    <property type="entry name" value="DNA_mismatch_repair_CS"/>
</dbReference>
<dbReference type="InterPro" id="IPR020667">
    <property type="entry name" value="DNA_mismatch_repair_MutL"/>
</dbReference>
<dbReference type="InterPro" id="IPR013507">
    <property type="entry name" value="DNA_mismatch_S5_2-like"/>
</dbReference>
<dbReference type="InterPro" id="IPR036890">
    <property type="entry name" value="HATPase_C_sf"/>
</dbReference>
<dbReference type="InterPro" id="IPR002099">
    <property type="entry name" value="MutL/Mlh/PMS"/>
</dbReference>
<dbReference type="InterPro" id="IPR038973">
    <property type="entry name" value="MutL/Mlh/Pms-like"/>
</dbReference>
<dbReference type="InterPro" id="IPR014790">
    <property type="entry name" value="MutL_C"/>
</dbReference>
<dbReference type="InterPro" id="IPR042120">
    <property type="entry name" value="MutL_C_dimsub"/>
</dbReference>
<dbReference type="InterPro" id="IPR042121">
    <property type="entry name" value="MutL_C_regsub"/>
</dbReference>
<dbReference type="InterPro" id="IPR037198">
    <property type="entry name" value="MutL_C_sf"/>
</dbReference>
<dbReference type="InterPro" id="IPR020568">
    <property type="entry name" value="Ribosomal_Su5_D2-typ_SF"/>
</dbReference>
<dbReference type="InterPro" id="IPR014721">
    <property type="entry name" value="Ribsml_uS5_D2-typ_fold_subgr"/>
</dbReference>
<dbReference type="NCBIfam" id="TIGR00585">
    <property type="entry name" value="mutl"/>
    <property type="match status" value="1"/>
</dbReference>
<dbReference type="NCBIfam" id="NF000948">
    <property type="entry name" value="PRK00095.1-1"/>
    <property type="match status" value="1"/>
</dbReference>
<dbReference type="PANTHER" id="PTHR10073">
    <property type="entry name" value="DNA MISMATCH REPAIR PROTEIN MLH, PMS, MUTL"/>
    <property type="match status" value="1"/>
</dbReference>
<dbReference type="PANTHER" id="PTHR10073:SF12">
    <property type="entry name" value="DNA MISMATCH REPAIR PROTEIN MLH1"/>
    <property type="match status" value="1"/>
</dbReference>
<dbReference type="Pfam" id="PF01119">
    <property type="entry name" value="DNA_mis_repair"/>
    <property type="match status" value="1"/>
</dbReference>
<dbReference type="Pfam" id="PF13589">
    <property type="entry name" value="HATPase_c_3"/>
    <property type="match status" value="1"/>
</dbReference>
<dbReference type="Pfam" id="PF08676">
    <property type="entry name" value="MutL_C"/>
    <property type="match status" value="1"/>
</dbReference>
<dbReference type="SMART" id="SM01340">
    <property type="entry name" value="DNA_mis_repair"/>
    <property type="match status" value="1"/>
</dbReference>
<dbReference type="SMART" id="SM00853">
    <property type="entry name" value="MutL_C"/>
    <property type="match status" value="1"/>
</dbReference>
<dbReference type="SUPFAM" id="SSF55874">
    <property type="entry name" value="ATPase domain of HSP90 chaperone/DNA topoisomerase II/histidine kinase"/>
    <property type="match status" value="1"/>
</dbReference>
<dbReference type="SUPFAM" id="SSF118116">
    <property type="entry name" value="DNA mismatch repair protein MutL"/>
    <property type="match status" value="1"/>
</dbReference>
<dbReference type="SUPFAM" id="SSF54211">
    <property type="entry name" value="Ribosomal protein S5 domain 2-like"/>
    <property type="match status" value="1"/>
</dbReference>
<dbReference type="PROSITE" id="PS00058">
    <property type="entry name" value="DNA_MISMATCH_REPAIR_1"/>
    <property type="match status" value="1"/>
</dbReference>
<comment type="function">
    <text evidence="1">This protein is involved in the repair of mismatches in DNA. It is required for dam-dependent methyl-directed DNA mismatch repair. May act as a 'molecular matchmaker', a protein that promotes the formation of a stable complex between two or more DNA-binding proteins in an ATP-dependent manner without itself being part of a final effector complex (By similarity).</text>
</comment>
<comment type="similarity">
    <text evidence="2">Belongs to the DNA mismatch repair MutL/HexB family.</text>
</comment>
<proteinExistence type="inferred from homology"/>
<name>MUTL_PASMU</name>
<reference key="1">
    <citation type="journal article" date="2001" name="Proc. Natl. Acad. Sci. U.S.A.">
        <title>Complete genomic sequence of Pasteurella multocida Pm70.</title>
        <authorList>
            <person name="May B.J."/>
            <person name="Zhang Q."/>
            <person name="Li L.L."/>
            <person name="Paustian M.L."/>
            <person name="Whittam T.S."/>
            <person name="Kapur V."/>
        </authorList>
    </citation>
    <scope>NUCLEOTIDE SEQUENCE [LARGE SCALE GENOMIC DNA]</scope>
    <source>
        <strain>Pm70</strain>
    </source>
</reference>
<protein>
    <recommendedName>
        <fullName>DNA mismatch repair protein MutL</fullName>
    </recommendedName>
</protein>
<evidence type="ECO:0000250" key="1"/>
<evidence type="ECO:0000305" key="2"/>
<sequence length="617" mass="69798">MAIKVLSPQLANQIAAGEVVERPASVVKELVENSLDAGATRIQIDIENGGSTLIRIRDNGIGIAKDELSLALARHATSKIASLDDLDNILSLGFRGEALASISSVSRLTLTSRPATQNEAWQVYAQGREMETTLQPASHPVGTTVEVANLFFNTPARRKFLRTDKTEFAHIDEVIRRIALAKMAISFTLTHNGKIVRQYRSAHDRTQKLKRVAAICGDEFVQNALEIDWKHDDLHLSGWVAQPTFSRTQNDLSYCYINGRMVRDKIITHAIRQAYADFLSPEQYPAFVLFIDLNPNDVDVNVHPTKHEVRFHQQRLVHDFICQGISNALHSEQASLYQTNEACVSANYQVEESAQHEYRPSYSKPNRAAAGQNIFDSSTTTPSTALFQTNKKNTQNRPHFSTNIPATRISKTEQAAYSALLSNSEMATVLPQEDGALLERKTPSILKALALVENKALLLQQQQQFYLLSLQQLQRLKIELSLQRDPVLQQPLLIPIVFRLNPQQLTYWQQQKTFFTQIGFEFHENLGQQRITLNRVPSCLRQQNLQKCIIVLLSQPLDTFSHFLTTLCDVIELEQITVYADAVTLLTETEQLLNQKQAIRLSELFIELNWQAYLEKM</sequence>
<accession>P57886</accession>
<feature type="chain" id="PRO_0000177957" description="DNA mismatch repair protein MutL">
    <location>
        <begin position="1"/>
        <end position="617"/>
    </location>
</feature>
<keyword id="KW-0227">DNA damage</keyword>
<keyword id="KW-0234">DNA repair</keyword>
<keyword id="KW-1185">Reference proteome</keyword>
<gene>
    <name type="primary">mutL</name>
    <name type="ordered locus">PM0904</name>
</gene>